<feature type="chain" id="PRO_0000051438" description="WD repeat domain phosphoinositide-interacting protein 1">
    <location>
        <begin position="1"/>
        <end position="446"/>
    </location>
</feature>
<feature type="repeat" description="WD 1">
    <location>
        <begin position="184"/>
        <end position="224"/>
    </location>
</feature>
<feature type="repeat" description="WD 2">
    <location>
        <begin position="230"/>
        <end position="269"/>
    </location>
</feature>
<feature type="repeat" description="WD 3">
    <location>
        <begin position="312"/>
        <end position="351"/>
    </location>
</feature>
<feature type="region of interest" description="Disordered" evidence="3">
    <location>
        <begin position="386"/>
        <end position="406"/>
    </location>
</feature>
<feature type="short sequence motif" description="Nuclear receptor interaction" evidence="1">
    <location>
        <begin position="131"/>
        <end position="136"/>
    </location>
</feature>
<feature type="short sequence motif" description="L/FRRG motif" evidence="2">
    <location>
        <begin position="225"/>
        <end position="228"/>
    </location>
</feature>
<feature type="splice variant" id="VSP_016967" description="In isoform 3." evidence="6">
    <original>SRPE</original>
    <variation>RCRT</variation>
    <location>
        <begin position="267"/>
        <end position="270"/>
    </location>
</feature>
<feature type="splice variant" id="VSP_016968" description="In isoform 3." evidence="6">
    <location>
        <begin position="271"/>
        <end position="446"/>
    </location>
</feature>
<feature type="splice variant" id="VSP_016969" description="In isoform 2." evidence="6 7">
    <original>IILCRGSQKGKTKQS</original>
    <variation>VSIRNP</variation>
    <location>
        <begin position="432"/>
        <end position="446"/>
    </location>
</feature>
<name>WIPI1_MOUSE</name>
<dbReference type="EMBL" id="AK031672">
    <property type="protein sequence ID" value="BAC27504.1"/>
    <property type="molecule type" value="mRNA"/>
</dbReference>
<dbReference type="EMBL" id="AK034907">
    <property type="protein sequence ID" value="BAC28878.1"/>
    <property type="molecule type" value="mRNA"/>
</dbReference>
<dbReference type="EMBL" id="AK050495">
    <property type="protein sequence ID" value="BAE20673.1"/>
    <property type="molecule type" value="mRNA"/>
</dbReference>
<dbReference type="EMBL" id="AK159608">
    <property type="protein sequence ID" value="BAE35227.1"/>
    <property type="molecule type" value="mRNA"/>
</dbReference>
<dbReference type="EMBL" id="AK170563">
    <property type="protein sequence ID" value="BAE41884.1"/>
    <property type="molecule type" value="mRNA"/>
</dbReference>
<dbReference type="EMBL" id="BC024811">
    <property type="protein sequence ID" value="AAH24811.1"/>
    <property type="status" value="ALT_INIT"/>
    <property type="molecule type" value="mRNA"/>
</dbReference>
<dbReference type="EMBL" id="BC024883">
    <property type="protein sequence ID" value="AAH24883.1"/>
    <property type="status" value="ALT_INIT"/>
    <property type="molecule type" value="mRNA"/>
</dbReference>
<dbReference type="EMBL" id="BC025560">
    <property type="protein sequence ID" value="AAH25560.1"/>
    <property type="molecule type" value="mRNA"/>
</dbReference>
<dbReference type="CCDS" id="CCDS25582.1">
    <molecule id="Q8R3E3-1"/>
</dbReference>
<dbReference type="RefSeq" id="NP_666052.1">
    <molecule id="Q8R3E3-1"/>
    <property type="nucleotide sequence ID" value="NM_145940.2"/>
</dbReference>
<dbReference type="SMR" id="Q8R3E3"/>
<dbReference type="BioGRID" id="206708">
    <property type="interactions" value="3"/>
</dbReference>
<dbReference type="FunCoup" id="Q8R3E3">
    <property type="interactions" value="1680"/>
</dbReference>
<dbReference type="STRING" id="10090.ENSMUSP00000099349"/>
<dbReference type="GlyGen" id="Q8R3E3">
    <property type="glycosylation" value="1 site, 1 O-linked glycan (1 site)"/>
</dbReference>
<dbReference type="iPTMnet" id="Q8R3E3"/>
<dbReference type="PhosphoSitePlus" id="Q8R3E3"/>
<dbReference type="PaxDb" id="10090-ENSMUSP00000099349"/>
<dbReference type="PeptideAtlas" id="Q8R3E3"/>
<dbReference type="ProteomicsDB" id="299787">
    <molecule id="Q8R3E3-1"/>
</dbReference>
<dbReference type="ProteomicsDB" id="299788">
    <molecule id="Q8R3E3-2"/>
</dbReference>
<dbReference type="ProteomicsDB" id="299789">
    <molecule id="Q8R3E3-3"/>
</dbReference>
<dbReference type="Pumba" id="Q8R3E3"/>
<dbReference type="Antibodypedia" id="1968">
    <property type="antibodies" value="292 antibodies from 36 providers"/>
</dbReference>
<dbReference type="Ensembl" id="ENSMUST00000047186.10">
    <molecule id="Q8R3E3-2"/>
    <property type="protein sequence ID" value="ENSMUSP00000038635.4"/>
    <property type="gene ID" value="ENSMUSG00000041895.16"/>
</dbReference>
<dbReference type="Ensembl" id="ENSMUST00000103060.10">
    <molecule id="Q8R3E3-1"/>
    <property type="protein sequence ID" value="ENSMUSP00000099349.4"/>
    <property type="gene ID" value="ENSMUSG00000041895.16"/>
</dbReference>
<dbReference type="GeneID" id="52639"/>
<dbReference type="KEGG" id="mmu:52639"/>
<dbReference type="UCSC" id="uc007mcq.1">
    <molecule id="Q8R3E3-1"/>
    <property type="organism name" value="mouse"/>
</dbReference>
<dbReference type="UCSC" id="uc007mcr.1">
    <molecule id="Q8R3E3-2"/>
    <property type="organism name" value="mouse"/>
</dbReference>
<dbReference type="AGR" id="MGI:1261864"/>
<dbReference type="CTD" id="55062"/>
<dbReference type="MGI" id="MGI:1261864">
    <property type="gene designation" value="Wipi1"/>
</dbReference>
<dbReference type="VEuPathDB" id="HostDB:ENSMUSG00000041895"/>
<dbReference type="eggNOG" id="KOG2110">
    <property type="taxonomic scope" value="Eukaryota"/>
</dbReference>
<dbReference type="GeneTree" id="ENSGT00940000156833"/>
<dbReference type="HOGENOM" id="CLU_025895_1_0_1"/>
<dbReference type="InParanoid" id="Q8R3E3"/>
<dbReference type="OMA" id="ATWGGMF"/>
<dbReference type="OrthoDB" id="1667587at2759"/>
<dbReference type="PhylomeDB" id="Q8R3E3"/>
<dbReference type="TreeFam" id="TF314879"/>
<dbReference type="Reactome" id="R-MMU-1632852">
    <property type="pathway name" value="Macroautophagy"/>
</dbReference>
<dbReference type="BioGRID-ORCS" id="52639">
    <property type="hits" value="2 hits in 79 CRISPR screens"/>
</dbReference>
<dbReference type="ChiTaRS" id="Wipi1">
    <property type="organism name" value="mouse"/>
</dbReference>
<dbReference type="PRO" id="PR:Q8R3E3"/>
<dbReference type="Proteomes" id="UP000000589">
    <property type="component" value="Chromosome 11"/>
</dbReference>
<dbReference type="RNAct" id="Q8R3E3">
    <property type="molecule type" value="protein"/>
</dbReference>
<dbReference type="Bgee" id="ENSMUSG00000041895">
    <property type="expression patterns" value="Expressed in seminal vesicle and 253 other cell types or tissues"/>
</dbReference>
<dbReference type="ExpressionAtlas" id="Q8R3E3">
    <property type="expression patterns" value="baseline and differential"/>
</dbReference>
<dbReference type="GO" id="GO:0000421">
    <property type="term" value="C:autophagosome membrane"/>
    <property type="evidence" value="ECO:0007669"/>
    <property type="project" value="Ensembl"/>
</dbReference>
<dbReference type="GO" id="GO:0030136">
    <property type="term" value="C:clathrin-coated vesicle"/>
    <property type="evidence" value="ECO:0007669"/>
    <property type="project" value="UniProtKB-SubCell"/>
</dbReference>
<dbReference type="GO" id="GO:0005856">
    <property type="term" value="C:cytoskeleton"/>
    <property type="evidence" value="ECO:0007669"/>
    <property type="project" value="UniProtKB-SubCell"/>
</dbReference>
<dbReference type="GO" id="GO:0005829">
    <property type="term" value="C:cytosol"/>
    <property type="evidence" value="ECO:0007669"/>
    <property type="project" value="GOC"/>
</dbReference>
<dbReference type="GO" id="GO:0010008">
    <property type="term" value="C:endosome membrane"/>
    <property type="evidence" value="ECO:0007669"/>
    <property type="project" value="Ensembl"/>
</dbReference>
<dbReference type="GO" id="GO:0000407">
    <property type="term" value="C:phagophore assembly site"/>
    <property type="evidence" value="ECO:0000314"/>
    <property type="project" value="MGI"/>
</dbReference>
<dbReference type="GO" id="GO:0034045">
    <property type="term" value="C:phagophore assembly site membrane"/>
    <property type="evidence" value="ECO:0007669"/>
    <property type="project" value="UniProtKB-SubCell"/>
</dbReference>
<dbReference type="GO" id="GO:0005802">
    <property type="term" value="C:trans-Golgi network"/>
    <property type="evidence" value="ECO:0007669"/>
    <property type="project" value="Ensembl"/>
</dbReference>
<dbReference type="GO" id="GO:0050681">
    <property type="term" value="F:nuclear androgen receptor binding"/>
    <property type="evidence" value="ECO:0007669"/>
    <property type="project" value="Ensembl"/>
</dbReference>
<dbReference type="GO" id="GO:0030331">
    <property type="term" value="F:nuclear estrogen receptor binding"/>
    <property type="evidence" value="ECO:0007669"/>
    <property type="project" value="Ensembl"/>
</dbReference>
<dbReference type="GO" id="GO:0080025">
    <property type="term" value="F:phosphatidylinositol-3,5-bisphosphate binding"/>
    <property type="evidence" value="ECO:0000250"/>
    <property type="project" value="UniProtKB"/>
</dbReference>
<dbReference type="GO" id="GO:0032266">
    <property type="term" value="F:phosphatidylinositol-3-phosphate binding"/>
    <property type="evidence" value="ECO:0000250"/>
    <property type="project" value="UniProtKB"/>
</dbReference>
<dbReference type="GO" id="GO:0030674">
    <property type="term" value="F:protein-macromolecule adaptor activity"/>
    <property type="evidence" value="ECO:0007669"/>
    <property type="project" value="Ensembl"/>
</dbReference>
<dbReference type="GO" id="GO:0005102">
    <property type="term" value="F:signaling receptor binding"/>
    <property type="evidence" value="ECO:0000266"/>
    <property type="project" value="MGI"/>
</dbReference>
<dbReference type="GO" id="GO:0000045">
    <property type="term" value="P:autophagosome assembly"/>
    <property type="evidence" value="ECO:0000250"/>
    <property type="project" value="UniProtKB"/>
</dbReference>
<dbReference type="GO" id="GO:0009267">
    <property type="term" value="P:cellular response to starvation"/>
    <property type="evidence" value="ECO:0000250"/>
    <property type="project" value="UniProtKB"/>
</dbReference>
<dbReference type="GO" id="GO:2000786">
    <property type="term" value="P:positive regulation of autophagosome assembly"/>
    <property type="evidence" value="ECO:0000250"/>
    <property type="project" value="UniProtKB"/>
</dbReference>
<dbReference type="GO" id="GO:0048203">
    <property type="term" value="P:vesicle targeting, trans-Golgi to endosome"/>
    <property type="evidence" value="ECO:0007669"/>
    <property type="project" value="Ensembl"/>
</dbReference>
<dbReference type="FunFam" id="2.130.10.10:FF:000343">
    <property type="entry name" value="WD repeat domain, phosphoinositide interacting 1"/>
    <property type="match status" value="1"/>
</dbReference>
<dbReference type="Gene3D" id="2.130.10.10">
    <property type="entry name" value="YVTN repeat-like/Quinoprotein amine dehydrogenase"/>
    <property type="match status" value="1"/>
</dbReference>
<dbReference type="InterPro" id="IPR048720">
    <property type="entry name" value="PROPPIN"/>
</dbReference>
<dbReference type="InterPro" id="IPR015943">
    <property type="entry name" value="WD40/YVTN_repeat-like_dom_sf"/>
</dbReference>
<dbReference type="InterPro" id="IPR036322">
    <property type="entry name" value="WD40_repeat_dom_sf"/>
</dbReference>
<dbReference type="InterPro" id="IPR001680">
    <property type="entry name" value="WD40_rpt"/>
</dbReference>
<dbReference type="PANTHER" id="PTHR11227">
    <property type="entry name" value="WD-REPEAT PROTEIN INTERACTING WITH PHOSPHOINOSIDES WIPI -RELATED"/>
    <property type="match status" value="1"/>
</dbReference>
<dbReference type="Pfam" id="PF21032">
    <property type="entry name" value="PROPPIN"/>
    <property type="match status" value="1"/>
</dbReference>
<dbReference type="SMART" id="SM00320">
    <property type="entry name" value="WD40"/>
    <property type="match status" value="3"/>
</dbReference>
<dbReference type="SUPFAM" id="SSF50978">
    <property type="entry name" value="WD40 repeat-like"/>
    <property type="match status" value="1"/>
</dbReference>
<evidence type="ECO:0000250" key="1">
    <source>
        <dbReference type="UniProtKB" id="Q5MNZ9"/>
    </source>
</evidence>
<evidence type="ECO:0000250" key="2">
    <source>
        <dbReference type="UniProtKB" id="Q9Y4P8"/>
    </source>
</evidence>
<evidence type="ECO:0000256" key="3">
    <source>
        <dbReference type="SAM" id="MobiDB-lite"/>
    </source>
</evidence>
<evidence type="ECO:0000269" key="4">
    <source>
    </source>
</evidence>
<evidence type="ECO:0000269" key="5">
    <source>
    </source>
</evidence>
<evidence type="ECO:0000303" key="6">
    <source>
    </source>
</evidence>
<evidence type="ECO:0000303" key="7">
    <source>
    </source>
</evidence>
<evidence type="ECO:0000305" key="8"/>
<proteinExistence type="evidence at protein level"/>
<sequence length="446" mass="48758">MEAEAADAPPGRVEAALSCFSFNQDCTSLAIGTKAGYKLFSLSSVEQLDQVHGSNEIPDVYIVERLFSSSLVVVVSHTKPRQMNVYHFKKGTEICNYSYSSNILSIRLNRQRLLVCLEESIYIHNIKDMKLLKTVLDIPSNPTGLCALSINHSNSYLAYPGSQSTGEIVLYDGNSLKTVCTIAAHEGTLAAITFNSSGSKLASASEKGTVIRVFSVPEGQKLYEFRRGMKRYVTISSLVFSMDSQFLCASSNTETVHIFKMEHLTDSRPEEPSTWSGYMGKMFMAATNYLPAQVSDMMNQDRAFATGRLNFSGQKNICTLSTIQKLPRLLVASSDGHLYIYNLDPQDGGECVLIKTHSLLSSGTTEENKENDLRPSLPPSYAATVARPSTSAASTVPGYSEDGGALRGEVIPEHEFATGPVCLDDENEFPPIILCRGSQKGKTKQS</sequence>
<keyword id="KW-0025">Alternative splicing</keyword>
<keyword id="KW-0072">Autophagy</keyword>
<keyword id="KW-0963">Cytoplasm</keyword>
<keyword id="KW-0968">Cytoplasmic vesicle</keyword>
<keyword id="KW-0206">Cytoskeleton</keyword>
<keyword id="KW-0903">Direct protein sequencing</keyword>
<keyword id="KW-0967">Endosome</keyword>
<keyword id="KW-0333">Golgi apparatus</keyword>
<keyword id="KW-0446">Lipid-binding</keyword>
<keyword id="KW-0472">Membrane</keyword>
<keyword id="KW-1185">Reference proteome</keyword>
<keyword id="KW-0677">Repeat</keyword>
<keyword id="KW-0853">WD repeat</keyword>
<gene>
    <name type="primary">Wipi1</name>
    <name type="synonym">D11Ertd498e</name>
</gene>
<protein>
    <recommendedName>
        <fullName>WD repeat domain phosphoinositide-interacting protein 1</fullName>
        <shortName>WIPI-1</shortName>
    </recommendedName>
    <alternativeName>
        <fullName>WD40 repeat protein interacting with phosphoinositides of 49 kDa</fullName>
        <shortName>WIPI 49 kDa</shortName>
    </alternativeName>
</protein>
<organism>
    <name type="scientific">Mus musculus</name>
    <name type="common">Mouse</name>
    <dbReference type="NCBI Taxonomy" id="10090"/>
    <lineage>
        <taxon>Eukaryota</taxon>
        <taxon>Metazoa</taxon>
        <taxon>Chordata</taxon>
        <taxon>Craniata</taxon>
        <taxon>Vertebrata</taxon>
        <taxon>Euteleostomi</taxon>
        <taxon>Mammalia</taxon>
        <taxon>Eutheria</taxon>
        <taxon>Euarchontoglires</taxon>
        <taxon>Glires</taxon>
        <taxon>Rodentia</taxon>
        <taxon>Myomorpha</taxon>
        <taxon>Muroidea</taxon>
        <taxon>Muridae</taxon>
        <taxon>Murinae</taxon>
        <taxon>Mus</taxon>
        <taxon>Mus</taxon>
    </lineage>
</organism>
<reference key="1">
    <citation type="journal article" date="2005" name="Science">
        <title>The transcriptional landscape of the mammalian genome.</title>
        <authorList>
            <person name="Carninci P."/>
            <person name="Kasukawa T."/>
            <person name="Katayama S."/>
            <person name="Gough J."/>
            <person name="Frith M.C."/>
            <person name="Maeda N."/>
            <person name="Oyama R."/>
            <person name="Ravasi T."/>
            <person name="Lenhard B."/>
            <person name="Wells C."/>
            <person name="Kodzius R."/>
            <person name="Shimokawa K."/>
            <person name="Bajic V.B."/>
            <person name="Brenner S.E."/>
            <person name="Batalov S."/>
            <person name="Forrest A.R."/>
            <person name="Zavolan M."/>
            <person name="Davis M.J."/>
            <person name="Wilming L.G."/>
            <person name="Aidinis V."/>
            <person name="Allen J.E."/>
            <person name="Ambesi-Impiombato A."/>
            <person name="Apweiler R."/>
            <person name="Aturaliya R.N."/>
            <person name="Bailey T.L."/>
            <person name="Bansal M."/>
            <person name="Baxter L."/>
            <person name="Beisel K.W."/>
            <person name="Bersano T."/>
            <person name="Bono H."/>
            <person name="Chalk A.M."/>
            <person name="Chiu K.P."/>
            <person name="Choudhary V."/>
            <person name="Christoffels A."/>
            <person name="Clutterbuck D.R."/>
            <person name="Crowe M.L."/>
            <person name="Dalla E."/>
            <person name="Dalrymple B.P."/>
            <person name="de Bono B."/>
            <person name="Della Gatta G."/>
            <person name="di Bernardo D."/>
            <person name="Down T."/>
            <person name="Engstrom P."/>
            <person name="Fagiolini M."/>
            <person name="Faulkner G."/>
            <person name="Fletcher C.F."/>
            <person name="Fukushima T."/>
            <person name="Furuno M."/>
            <person name="Futaki S."/>
            <person name="Gariboldi M."/>
            <person name="Georgii-Hemming P."/>
            <person name="Gingeras T.R."/>
            <person name="Gojobori T."/>
            <person name="Green R.E."/>
            <person name="Gustincich S."/>
            <person name="Harbers M."/>
            <person name="Hayashi Y."/>
            <person name="Hensch T.K."/>
            <person name="Hirokawa N."/>
            <person name="Hill D."/>
            <person name="Huminiecki L."/>
            <person name="Iacono M."/>
            <person name="Ikeo K."/>
            <person name="Iwama A."/>
            <person name="Ishikawa T."/>
            <person name="Jakt M."/>
            <person name="Kanapin A."/>
            <person name="Katoh M."/>
            <person name="Kawasawa Y."/>
            <person name="Kelso J."/>
            <person name="Kitamura H."/>
            <person name="Kitano H."/>
            <person name="Kollias G."/>
            <person name="Krishnan S.P."/>
            <person name="Kruger A."/>
            <person name="Kummerfeld S.K."/>
            <person name="Kurochkin I.V."/>
            <person name="Lareau L.F."/>
            <person name="Lazarevic D."/>
            <person name="Lipovich L."/>
            <person name="Liu J."/>
            <person name="Liuni S."/>
            <person name="McWilliam S."/>
            <person name="Madan Babu M."/>
            <person name="Madera M."/>
            <person name="Marchionni L."/>
            <person name="Matsuda H."/>
            <person name="Matsuzawa S."/>
            <person name="Miki H."/>
            <person name="Mignone F."/>
            <person name="Miyake S."/>
            <person name="Morris K."/>
            <person name="Mottagui-Tabar S."/>
            <person name="Mulder N."/>
            <person name="Nakano N."/>
            <person name="Nakauchi H."/>
            <person name="Ng P."/>
            <person name="Nilsson R."/>
            <person name="Nishiguchi S."/>
            <person name="Nishikawa S."/>
            <person name="Nori F."/>
            <person name="Ohara O."/>
            <person name="Okazaki Y."/>
            <person name="Orlando V."/>
            <person name="Pang K.C."/>
            <person name="Pavan W.J."/>
            <person name="Pavesi G."/>
            <person name="Pesole G."/>
            <person name="Petrovsky N."/>
            <person name="Piazza S."/>
            <person name="Reed J."/>
            <person name="Reid J.F."/>
            <person name="Ring B.Z."/>
            <person name="Ringwald M."/>
            <person name="Rost B."/>
            <person name="Ruan Y."/>
            <person name="Salzberg S.L."/>
            <person name="Sandelin A."/>
            <person name="Schneider C."/>
            <person name="Schoenbach C."/>
            <person name="Sekiguchi K."/>
            <person name="Semple C.A."/>
            <person name="Seno S."/>
            <person name="Sessa L."/>
            <person name="Sheng Y."/>
            <person name="Shibata Y."/>
            <person name="Shimada H."/>
            <person name="Shimada K."/>
            <person name="Silva D."/>
            <person name="Sinclair B."/>
            <person name="Sperling S."/>
            <person name="Stupka E."/>
            <person name="Sugiura K."/>
            <person name="Sultana R."/>
            <person name="Takenaka Y."/>
            <person name="Taki K."/>
            <person name="Tammoja K."/>
            <person name="Tan S.L."/>
            <person name="Tang S."/>
            <person name="Taylor M.S."/>
            <person name="Tegner J."/>
            <person name="Teichmann S.A."/>
            <person name="Ueda H.R."/>
            <person name="van Nimwegen E."/>
            <person name="Verardo R."/>
            <person name="Wei C.L."/>
            <person name="Yagi K."/>
            <person name="Yamanishi H."/>
            <person name="Zabarovsky E."/>
            <person name="Zhu S."/>
            <person name="Zimmer A."/>
            <person name="Hide W."/>
            <person name="Bult C."/>
            <person name="Grimmond S.M."/>
            <person name="Teasdale R.D."/>
            <person name="Liu E.T."/>
            <person name="Brusic V."/>
            <person name="Quackenbush J."/>
            <person name="Wahlestedt C."/>
            <person name="Mattick J.S."/>
            <person name="Hume D.A."/>
            <person name="Kai C."/>
            <person name="Sasaki D."/>
            <person name="Tomaru Y."/>
            <person name="Fukuda S."/>
            <person name="Kanamori-Katayama M."/>
            <person name="Suzuki M."/>
            <person name="Aoki J."/>
            <person name="Arakawa T."/>
            <person name="Iida J."/>
            <person name="Imamura K."/>
            <person name="Itoh M."/>
            <person name="Kato T."/>
            <person name="Kawaji H."/>
            <person name="Kawagashira N."/>
            <person name="Kawashima T."/>
            <person name="Kojima M."/>
            <person name="Kondo S."/>
            <person name="Konno H."/>
            <person name="Nakano K."/>
            <person name="Ninomiya N."/>
            <person name="Nishio T."/>
            <person name="Okada M."/>
            <person name="Plessy C."/>
            <person name="Shibata K."/>
            <person name="Shiraki T."/>
            <person name="Suzuki S."/>
            <person name="Tagami M."/>
            <person name="Waki K."/>
            <person name="Watahiki A."/>
            <person name="Okamura-Oho Y."/>
            <person name="Suzuki H."/>
            <person name="Kawai J."/>
            <person name="Hayashizaki Y."/>
        </authorList>
    </citation>
    <scope>NUCLEOTIDE SEQUENCE [LARGE SCALE MRNA] (ISOFORMS 1 AND 2)</scope>
    <source>
        <strain>C57BL/6J</strain>
        <strain>NOD</strain>
        <tissue>Dendritic cell</tissue>
        <tissue>Embryo</tissue>
        <tissue>Osteoclast</tissue>
        <tissue>Pancreas</tissue>
        <tissue>Testis</tissue>
    </source>
</reference>
<reference key="2">
    <citation type="journal article" date="2004" name="Genome Res.">
        <title>The status, quality, and expansion of the NIH full-length cDNA project: the Mammalian Gene Collection (MGC).</title>
        <authorList>
            <consortium name="The MGC Project Team"/>
        </authorList>
    </citation>
    <scope>NUCLEOTIDE SEQUENCE [LARGE SCALE MRNA] (ISOFORMS 1; 2 AND 3)</scope>
    <source>
        <strain>FVB/N</strain>
        <tissue>Mammary tumor</tissue>
    </source>
</reference>
<reference key="3">
    <citation type="submission" date="2009-01" db="UniProtKB">
        <authorList>
            <person name="Lubec G."/>
            <person name="Sunyer B."/>
            <person name="Chen W.-Q."/>
        </authorList>
    </citation>
    <scope>PROTEIN SEQUENCE OF 316-325</scope>
    <scope>IDENTIFICATION BY MASS SPECTROMETRY</scope>
    <source>
        <strain>OF1</strain>
        <tissue>Hippocampus</tissue>
    </source>
</reference>
<reference key="4">
    <citation type="journal article" date="2010" name="Cell">
        <title>A tissue-specific atlas of mouse protein phosphorylation and expression.</title>
        <authorList>
            <person name="Huttlin E.L."/>
            <person name="Jedrychowski M.P."/>
            <person name="Elias J.E."/>
            <person name="Goswami T."/>
            <person name="Rad R."/>
            <person name="Beausoleil S.A."/>
            <person name="Villen J."/>
            <person name="Haas W."/>
            <person name="Sowa M.E."/>
            <person name="Gygi S.P."/>
        </authorList>
    </citation>
    <scope>IDENTIFICATION BY MASS SPECTROMETRY [LARGE SCALE ANALYSIS]</scope>
    <source>
        <tissue>Heart</tissue>
    </source>
</reference>
<reference key="5">
    <citation type="journal article" date="2011" name="Mol. Pharmacol.">
        <title>Ca2+/calmodulin-dependent kinase (CaMK) signaling via CaMKI and AMP-activated protein kinase contributes to the regulation of WIPI-1 at the onset of autophagy.</title>
        <authorList>
            <person name="Pfisterer S.G."/>
            <person name="Mauthe M."/>
            <person name="Codogno P."/>
            <person name="Proikas-Cezanne T."/>
        </authorList>
    </citation>
    <scope>REGULATION BY CALCIUM-SIGNALING</scope>
    <scope>SUBCELLULAR LOCATION</scope>
</reference>
<reference key="6">
    <citation type="journal article" date="2012" name="J. Cell Sci.">
        <title>Structures containing Atg9A and the ULK1 complex independently target depolarized mitochondria at initial stages of Parkin-mediated mitophagy.</title>
        <authorList>
            <person name="Itakura E."/>
            <person name="Kishi-Itakura C."/>
            <person name="Koyama-Honda I."/>
            <person name="Mizushima N."/>
        </authorList>
    </citation>
    <scope>FUNCTION</scope>
</reference>
<comment type="function">
    <text evidence="1 5">Component of the autophagy machinery that controls the major intracellular degradation process by which cytoplasmic materials are packaged into autophagosomes and delivered to lysosomes for degradation (PubMed:22275429). Plays an important role in starvation- and calcium-mediated autophagy, as well as in mitophagy. Functions downstream of the ULK1 and PI3-kinases that produce phosphatidylinositol 3-phosphate (PtdIns3P) on membranes of the endoplasmic reticulum once activated. Binds phosphatidylinositol 3-phosphate (PtdIns3P), and maybe other phosphoinositides including PtdIns3,5P2 and PtdIns5P, and is recruited to phagophore assembly sites at the endoplasmic reticulum membranes. There, it assists WIPI2 in the recruitment of ATG12-ATG5-ATG16L1, a complex that directly controls the elongation of the nascent autophagosomal membrane. Together with WDR45/WIPI4, promotes ATG2 (ATG2A or ATG2B)-mediated lipid transfer by enhancing ATG2-association with phosphatidylinositol 3-monophosphate (PI3P)-containing membranes. Involved in xenophagy of Staphylococcus aureus. Invading S.aureus cells become entrapped in autophagosome-like WIPI1 positive vesicles targeted for lysosomal degradation. Also plays a distinct role in controlling the transcription of melanogenic enzymes and melanosome maturation, a process that is distinct from starvation-induced autophagy. May also regulate the trafficking of proteins involved in the mannose-6-phosphate receptor (MPR) recycling pathway (By similarity).</text>
</comment>
<comment type="subunit">
    <text evidence="1">Interacts with androgen receptor (AR) and the estrogen receptors ESR1 and ESR2. Interacts with WIPI2. Interacts with WDR45. Interacts with ATG16L1. May interact with NUDC.</text>
</comment>
<comment type="subcellular location">
    <subcellularLocation>
        <location evidence="1">Golgi apparatus</location>
        <location evidence="1">trans-Golgi network</location>
    </subcellularLocation>
    <subcellularLocation>
        <location evidence="1">Endosome</location>
    </subcellularLocation>
    <subcellularLocation>
        <location evidence="1">Cytoplasmic vesicle</location>
        <location evidence="1">Clathrin-coated vesicle</location>
    </subcellularLocation>
    <subcellularLocation>
        <location evidence="4">Preautophagosomal structure membrane</location>
        <topology evidence="4">Peripheral membrane protein</topology>
    </subcellularLocation>
    <subcellularLocation>
        <location evidence="1">Cytoplasm</location>
        <location evidence="1">Cytoskeleton</location>
    </subcellularLocation>
    <text evidence="1">Trans elements of the Golgi and peripheral endosomes. Dynamically cycles through these compartments and is susceptible to conditions that modulate membrane flux. Enriched in clathrin-coated vesicles. Upon starvation-induced autophagy, accumulates at subcellular structures in the cytoplasm: enlarged vesicular and lasso-like structures, and large cup-shaped structures predominantly around the nucleus. Recruitment to autophagic membranes is controlled by MTMR14. Labile microtubules specifically recruit markers of autophagosome formation like WIPI1, whereas mature autophagosomes may bind to stable microtubules.</text>
</comment>
<comment type="alternative products">
    <event type="alternative splicing"/>
    <isoform>
        <id>Q8R3E3-1</id>
        <name>1</name>
        <sequence type="displayed"/>
    </isoform>
    <isoform>
        <id>Q8R3E3-2</id>
        <name>2</name>
        <sequence type="described" ref="VSP_016969"/>
    </isoform>
    <isoform>
        <id>Q8R3E3-3</id>
        <name>3</name>
        <sequence type="described" ref="VSP_016967 VSP_016968"/>
    </isoform>
</comment>
<comment type="domain">
    <text evidence="1">The N-terminus might form a beta-propeller domain involved in specific binding to phosphatidylinositol 3,5-bisphosphate (PIP2), leading to the association of the protein to the membrane. Association to the membrane can also occur through binding to phosphatidylinositol 3-monophosphate (PI3P).</text>
</comment>
<comment type="domain">
    <text evidence="2">The L/FRRG motif is required for recruitment to PtdIns3P.</text>
</comment>
<comment type="similarity">
    <text evidence="8">Belongs to the WD repeat PROPPIN family.</text>
</comment>
<comment type="sequence caution" evidence="8">
    <conflict type="erroneous initiation">
        <sequence resource="EMBL-CDS" id="AAH24811"/>
    </conflict>
    <text>Extended N-terminus.</text>
</comment>
<comment type="sequence caution" evidence="8">
    <conflict type="erroneous initiation">
        <sequence resource="EMBL-CDS" id="AAH24883"/>
    </conflict>
    <text>Extended N-terminus.</text>
</comment>
<accession>Q8R3E3</accession>
<accession>Q8BGE1</accession>
<accession>Q8R1A9</accession>
<accession>Q8R1C7</accession>